<organismHost>
    <name type="scientific">Aves</name>
    <dbReference type="NCBI Taxonomy" id="8782"/>
</organismHost>
<organismHost>
    <name type="scientific">Homo sapiens</name>
    <name type="common">Human</name>
    <dbReference type="NCBI Taxonomy" id="9606"/>
</organismHost>
<organismHost>
    <name type="scientific">Sus scrofa</name>
    <name type="common">Pig</name>
    <dbReference type="NCBI Taxonomy" id="9823"/>
</organismHost>
<gene>
    <name evidence="1" type="primary">NP</name>
</gene>
<organism>
    <name type="scientific">Influenza A virus (strain A/Duck/Australia/749/1980 H1N1)</name>
    <dbReference type="NCBI Taxonomy" id="383547"/>
    <lineage>
        <taxon>Viruses</taxon>
        <taxon>Riboviria</taxon>
        <taxon>Orthornavirae</taxon>
        <taxon>Negarnaviricota</taxon>
        <taxon>Polyploviricotina</taxon>
        <taxon>Insthoviricetes</taxon>
        <taxon>Articulavirales</taxon>
        <taxon>Orthomyxoviridae</taxon>
        <taxon>Alphainfluenzavirus</taxon>
        <taxon>Alphainfluenzavirus influenzae</taxon>
        <taxon>Influenza A virus</taxon>
    </lineage>
</organism>
<proteinExistence type="inferred from homology"/>
<reference key="1">
    <citation type="journal article" date="1991" name="J. Virol.">
        <title>Evolution of influenza A virus nucleoprotein genes: implications for the origins of H1N1 human and classical swine viruses.</title>
        <authorList>
            <person name="Gorman O.T."/>
            <person name="Bean W.J."/>
            <person name="Kawaoka Y."/>
            <person name="Donatelli I."/>
            <person name="Guo Y."/>
            <person name="Webster R.G."/>
        </authorList>
    </citation>
    <scope>NUCLEOTIDE SEQUENCE [GENOMIC RNA]</scope>
</reference>
<comment type="function">
    <text evidence="1">Encapsidates the negative strand viral RNA, protecting it from nucleases. The encapsidated genomic RNA is termed the ribonucleoprotein (RNP) and serves as template for transcription and replication. The RNP needs to be localized in the host nucleus to start an infectious cycle, but is too large to diffuse through the nuclear pore complex. NP comprises at least 2 nuclear localization signals that are responsible for the active RNP import into the nucleus through cellular importin alpha/beta pathway. Later in the infection, nclear export of RNPs are mediated through viral proteins NEP interacting with M1 which binds nucleoproteins. It is possible that nucleoprotein binds directly host exportin-1/XPO1 and plays an active role in RNPs nuclear export. M1 interaction with RNP seems to hide nucleoprotein's nuclear localization signals. Soon after a virion infects a new cell, M1 dissociates from the RNP under acidification of the virion driven by M2 protein. Dissociation of M1 from RNP unmasks nucleoprotein's nuclear localization signals, targeting the RNP to the nucleus.</text>
</comment>
<comment type="subunit">
    <text evidence="1">Homomultimerizes to form the nucleocapsid. May bind host exportin-1/XPO1. Binds to viral genomic RNA. Protein-RNA contacts are mediated by a combination of electrostatic interactions between positively charged residues and the phosphate backbone and planar interactions between aromatic side chains and bases.</text>
</comment>
<comment type="subcellular location">
    <subcellularLocation>
        <location evidence="1">Virion</location>
    </subcellularLocation>
    <subcellularLocation>
        <location evidence="1">Host nucleus</location>
    </subcellularLocation>
</comment>
<comment type="PTM">
    <text evidence="1">Late in virus-infected cells, may be cleaved from a 56-kDa protein to a 53-kDa protein by a cellular caspase. This cleavage might be a marker for the onset of apoptosis in infected cells or have a specific function in virus host interaction.</text>
</comment>
<comment type="similarity">
    <text evidence="1">Belongs to the influenza viruses nucleoprotein family.</text>
</comment>
<keyword id="KW-0167">Capsid protein</keyword>
<keyword id="KW-1139">Helical capsid protein</keyword>
<keyword id="KW-1048">Host nucleus</keyword>
<keyword id="KW-0945">Host-virus interaction</keyword>
<keyword id="KW-0687">Ribonucleoprotein</keyword>
<keyword id="KW-0694">RNA-binding</keyword>
<keyword id="KW-0543">Viral nucleoprotein</keyword>
<keyword id="KW-1163">Viral penetration into host nucleus</keyword>
<keyword id="KW-0946">Virion</keyword>
<keyword id="KW-1160">Virus entry into host cell</keyword>
<name>NCAP_I80A1</name>
<evidence type="ECO:0000255" key="1">
    <source>
        <dbReference type="HAMAP-Rule" id="MF_04070"/>
    </source>
</evidence>
<evidence type="ECO:0000256" key="2">
    <source>
        <dbReference type="SAM" id="MobiDB-lite"/>
    </source>
</evidence>
<sequence>MASQGTKRSYEQMETGGERQNATEIRASVGRMVGGIGRFYIQMCTELKLSDYEGRLIQNSITIERMVLSAFDERRNKYLEEHPSAGKDPKKTGGPIYRRRDGKWVRELILYDKEEIRRIWRQANNGEDATAGLTHLMIWHSNLNDATYQRTRALVRTGMDPRMCSLMQGSTLPRRSGAAGAAVKGVGTMVMELIRMIKRGINDRNFWRGENGRRTRIAYERMCNILKGKFQTAAQRAMMDQVRESRNPGNAEIEDLIFLARSALILRGSVAHKSCLPACVYGLAVASGYDFEREGYSLVGIDPFRLLQNSQVFSLIRPNENPAHKSQLVWMACHSAAFEDLRVSSFIRGARVVPRGQLSTRGVQIASNENMETMDSSTLELRSRYWAIRTRSGGNTNQQRASAGQISVQPTFSVQRNLPFERATIMAAFTGNTEGRTSDMRTEIIRMMESARPEDVSFQGRGVFELSDEKATNPIVPSFDMSNEGSYFFGDNAEEYDN</sequence>
<protein>
    <recommendedName>
        <fullName evidence="1">Nucleoprotein</fullName>
    </recommendedName>
    <alternativeName>
        <fullName evidence="1">Nucleocapsid protein</fullName>
        <shortName evidence="1">Protein N</shortName>
    </alternativeName>
</protein>
<dbReference type="EMBL" id="M63783">
    <property type="protein sequence ID" value="AAA52244.1"/>
    <property type="molecule type" value="Genomic_RNA"/>
</dbReference>
<dbReference type="SMR" id="P26065"/>
<dbReference type="GO" id="GO:0019029">
    <property type="term" value="C:helical viral capsid"/>
    <property type="evidence" value="ECO:0007669"/>
    <property type="project" value="UniProtKB-UniRule"/>
</dbReference>
<dbReference type="GO" id="GO:0043657">
    <property type="term" value="C:host cell"/>
    <property type="evidence" value="ECO:0007669"/>
    <property type="project" value="GOC"/>
</dbReference>
<dbReference type="GO" id="GO:0042025">
    <property type="term" value="C:host cell nucleus"/>
    <property type="evidence" value="ECO:0007669"/>
    <property type="project" value="UniProtKB-SubCell"/>
</dbReference>
<dbReference type="GO" id="GO:1990904">
    <property type="term" value="C:ribonucleoprotein complex"/>
    <property type="evidence" value="ECO:0007669"/>
    <property type="project" value="UniProtKB-KW"/>
</dbReference>
<dbReference type="GO" id="GO:0019013">
    <property type="term" value="C:viral nucleocapsid"/>
    <property type="evidence" value="ECO:0007669"/>
    <property type="project" value="UniProtKB-UniRule"/>
</dbReference>
<dbReference type="GO" id="GO:0003723">
    <property type="term" value="F:RNA binding"/>
    <property type="evidence" value="ECO:0007669"/>
    <property type="project" value="UniProtKB-UniRule"/>
</dbReference>
<dbReference type="GO" id="GO:0005198">
    <property type="term" value="F:structural molecule activity"/>
    <property type="evidence" value="ECO:0007669"/>
    <property type="project" value="UniProtKB-UniRule"/>
</dbReference>
<dbReference type="GO" id="GO:0046718">
    <property type="term" value="P:symbiont entry into host cell"/>
    <property type="evidence" value="ECO:0007669"/>
    <property type="project" value="UniProtKB-KW"/>
</dbReference>
<dbReference type="GO" id="GO:0075732">
    <property type="term" value="P:viral penetration into host nucleus"/>
    <property type="evidence" value="ECO:0007669"/>
    <property type="project" value="UniProtKB-UniRule"/>
</dbReference>
<dbReference type="HAMAP" id="MF_04070">
    <property type="entry name" value="INFV_NCAP"/>
    <property type="match status" value="1"/>
</dbReference>
<dbReference type="InterPro" id="IPR002141">
    <property type="entry name" value="Flu_NP"/>
</dbReference>
<dbReference type="Pfam" id="PF00506">
    <property type="entry name" value="Flu_NP"/>
    <property type="match status" value="1"/>
</dbReference>
<dbReference type="SUPFAM" id="SSF161003">
    <property type="entry name" value="flu NP-like"/>
    <property type="match status" value="1"/>
</dbReference>
<accession>P26065</accession>
<feature type="chain" id="PRO_0000079031" description="Nucleoprotein">
    <location>
        <begin position="1"/>
        <end position="498"/>
    </location>
</feature>
<feature type="region of interest" description="Disordered" evidence="2">
    <location>
        <begin position="1"/>
        <end position="21"/>
    </location>
</feature>
<feature type="short sequence motif" description="Unconventional nuclear localization signal" evidence="1">
    <location>
        <begin position="1"/>
        <end position="18"/>
    </location>
</feature>
<feature type="short sequence motif" description="Bipartite nuclear localization signal" evidence="1">
    <location>
        <begin position="198"/>
        <end position="216"/>
    </location>
</feature>